<sequence length="390" mass="41088">MATLNPRDVVIVDGVRSAMGKSKNGMFRNVRADSLSAELVRALVARNQFDVNEVEDLIWGCVNQTLEQGMNIGRNIGLLAGLPKTVAGQTVNRLCGSSMQAIHTAAAQIATNQGDIFIIGGVEHMGHVGMMHGIDLNPEASKHYAKASNMMGLTAEMLGRMNGITREEQDAFGVESHRRAWAATQEGRFKNEIIGVEGHDANGFKILCDIDEVIRPDANLEAFKALKPVFDPKGGSVTAATSSALSDGASAMLLMSAERAQALGLKPRAVIRSMAVAGCDAAIMGYGPVPATQKALKRAGLSIADIQTVELNEAFAAQGLSVLKGLGLYDKQDIVNLNGGAIALGHPLGCSGARITTTLLNVMEQQDTQIGLATMCIGLGQGIATVIERV</sequence>
<proteinExistence type="inferred from homology"/>
<organism>
    <name type="scientific">Acinetobacter baumannii (strain AB0057)</name>
    <dbReference type="NCBI Taxonomy" id="480119"/>
    <lineage>
        <taxon>Bacteria</taxon>
        <taxon>Pseudomonadati</taxon>
        <taxon>Pseudomonadota</taxon>
        <taxon>Gammaproteobacteria</taxon>
        <taxon>Moraxellales</taxon>
        <taxon>Moraxellaceae</taxon>
        <taxon>Acinetobacter</taxon>
        <taxon>Acinetobacter calcoaceticus/baumannii complex</taxon>
    </lineage>
</organism>
<feature type="chain" id="PRO_1000186018" description="3-ketoacyl-CoA thiolase">
    <location>
        <begin position="1"/>
        <end position="390"/>
    </location>
</feature>
<feature type="active site" description="Acyl-thioester intermediate" evidence="1">
    <location>
        <position position="95"/>
    </location>
</feature>
<feature type="active site" description="Proton acceptor" evidence="1">
    <location>
        <position position="346"/>
    </location>
</feature>
<feature type="active site" description="Proton acceptor" evidence="1">
    <location>
        <position position="376"/>
    </location>
</feature>
<protein>
    <recommendedName>
        <fullName evidence="1">3-ketoacyl-CoA thiolase</fullName>
        <ecNumber evidence="1">2.3.1.16</ecNumber>
    </recommendedName>
    <alternativeName>
        <fullName evidence="1">Acetyl-CoA acyltransferase</fullName>
    </alternativeName>
    <alternativeName>
        <fullName evidence="1">Beta-ketothiolase</fullName>
    </alternativeName>
    <alternativeName>
        <fullName evidence="1">Fatty acid oxidation complex subunit beta</fullName>
    </alternativeName>
</protein>
<name>FADA_ACIB5</name>
<comment type="function">
    <text evidence="1">Catalyzes the final step of fatty acid oxidation in which acetyl-CoA is released and the CoA ester of a fatty acid two carbons shorter is formed.</text>
</comment>
<comment type="catalytic activity">
    <reaction evidence="1">
        <text>an acyl-CoA + acetyl-CoA = a 3-oxoacyl-CoA + CoA</text>
        <dbReference type="Rhea" id="RHEA:21564"/>
        <dbReference type="ChEBI" id="CHEBI:57287"/>
        <dbReference type="ChEBI" id="CHEBI:57288"/>
        <dbReference type="ChEBI" id="CHEBI:58342"/>
        <dbReference type="ChEBI" id="CHEBI:90726"/>
        <dbReference type="EC" id="2.3.1.16"/>
    </reaction>
</comment>
<comment type="pathway">
    <text evidence="1">Lipid metabolism; fatty acid beta-oxidation.</text>
</comment>
<comment type="subunit">
    <text evidence="1">Heterotetramer of two alpha chains (FadB) and two beta chains (FadA).</text>
</comment>
<comment type="subcellular location">
    <subcellularLocation>
        <location evidence="1">Cytoplasm</location>
    </subcellularLocation>
</comment>
<comment type="similarity">
    <text evidence="1">Belongs to the thiolase-like superfamily. Thiolase family.</text>
</comment>
<keyword id="KW-0012">Acyltransferase</keyword>
<keyword id="KW-0963">Cytoplasm</keyword>
<keyword id="KW-0276">Fatty acid metabolism</keyword>
<keyword id="KW-0442">Lipid degradation</keyword>
<keyword id="KW-0443">Lipid metabolism</keyword>
<keyword id="KW-0808">Transferase</keyword>
<accession>B7I3P0</accession>
<reference key="1">
    <citation type="journal article" date="2008" name="J. Bacteriol.">
        <title>Comparative genome sequence analysis of multidrug-resistant Acinetobacter baumannii.</title>
        <authorList>
            <person name="Adams M.D."/>
            <person name="Goglin K."/>
            <person name="Molyneaux N."/>
            <person name="Hujer K.M."/>
            <person name="Lavender H."/>
            <person name="Jamison J.J."/>
            <person name="MacDonald I.J."/>
            <person name="Martin K.M."/>
            <person name="Russo T."/>
            <person name="Campagnari A.A."/>
            <person name="Hujer A.M."/>
            <person name="Bonomo R.A."/>
            <person name="Gill S.R."/>
        </authorList>
    </citation>
    <scope>NUCLEOTIDE SEQUENCE [LARGE SCALE GENOMIC DNA]</scope>
    <source>
        <strain>AB0057</strain>
    </source>
</reference>
<evidence type="ECO:0000255" key="1">
    <source>
        <dbReference type="HAMAP-Rule" id="MF_01620"/>
    </source>
</evidence>
<gene>
    <name evidence="1" type="primary">fadA</name>
    <name type="ordered locus">AB57_0386</name>
</gene>
<dbReference type="EC" id="2.3.1.16" evidence="1"/>
<dbReference type="EMBL" id="CP001182">
    <property type="protein sequence ID" value="ACJ39812.1"/>
    <property type="molecule type" value="Genomic_DNA"/>
</dbReference>
<dbReference type="RefSeq" id="WP_000212712.1">
    <property type="nucleotide sequence ID" value="NC_011586.2"/>
</dbReference>
<dbReference type="SMR" id="B7I3P0"/>
<dbReference type="GeneID" id="92892301"/>
<dbReference type="KEGG" id="abn:AB57_0386"/>
<dbReference type="HOGENOM" id="CLU_031026_2_2_6"/>
<dbReference type="UniPathway" id="UPA00659"/>
<dbReference type="Proteomes" id="UP000007094">
    <property type="component" value="Chromosome"/>
</dbReference>
<dbReference type="GO" id="GO:0005737">
    <property type="term" value="C:cytoplasm"/>
    <property type="evidence" value="ECO:0007669"/>
    <property type="project" value="UniProtKB-SubCell"/>
</dbReference>
<dbReference type="GO" id="GO:0003988">
    <property type="term" value="F:acetyl-CoA C-acyltransferase activity"/>
    <property type="evidence" value="ECO:0007669"/>
    <property type="project" value="UniProtKB-UniRule"/>
</dbReference>
<dbReference type="GO" id="GO:0006635">
    <property type="term" value="P:fatty acid beta-oxidation"/>
    <property type="evidence" value="ECO:0007669"/>
    <property type="project" value="UniProtKB-UniRule"/>
</dbReference>
<dbReference type="GO" id="GO:0010124">
    <property type="term" value="P:phenylacetate catabolic process"/>
    <property type="evidence" value="ECO:0007669"/>
    <property type="project" value="TreeGrafter"/>
</dbReference>
<dbReference type="CDD" id="cd00751">
    <property type="entry name" value="thiolase"/>
    <property type="match status" value="1"/>
</dbReference>
<dbReference type="FunFam" id="3.40.47.10:FF:000010">
    <property type="entry name" value="Acetyl-CoA acetyltransferase (Thiolase)"/>
    <property type="match status" value="1"/>
</dbReference>
<dbReference type="Gene3D" id="3.40.47.10">
    <property type="match status" value="2"/>
</dbReference>
<dbReference type="HAMAP" id="MF_01620">
    <property type="entry name" value="FadA"/>
    <property type="match status" value="1"/>
</dbReference>
<dbReference type="InterPro" id="IPR012805">
    <property type="entry name" value="FadA"/>
</dbReference>
<dbReference type="InterPro" id="IPR002155">
    <property type="entry name" value="Thiolase"/>
</dbReference>
<dbReference type="InterPro" id="IPR016039">
    <property type="entry name" value="Thiolase-like"/>
</dbReference>
<dbReference type="InterPro" id="IPR050215">
    <property type="entry name" value="Thiolase-like_sf_Thiolase"/>
</dbReference>
<dbReference type="InterPro" id="IPR020615">
    <property type="entry name" value="Thiolase_acyl_enz_int_AS"/>
</dbReference>
<dbReference type="InterPro" id="IPR020610">
    <property type="entry name" value="Thiolase_AS"/>
</dbReference>
<dbReference type="InterPro" id="IPR020617">
    <property type="entry name" value="Thiolase_C"/>
</dbReference>
<dbReference type="InterPro" id="IPR020613">
    <property type="entry name" value="Thiolase_CS"/>
</dbReference>
<dbReference type="InterPro" id="IPR020616">
    <property type="entry name" value="Thiolase_N"/>
</dbReference>
<dbReference type="NCBIfam" id="TIGR01930">
    <property type="entry name" value="AcCoA-C-Actrans"/>
    <property type="match status" value="1"/>
</dbReference>
<dbReference type="NCBIfam" id="TIGR02445">
    <property type="entry name" value="fadA"/>
    <property type="match status" value="1"/>
</dbReference>
<dbReference type="NCBIfam" id="NF006510">
    <property type="entry name" value="PRK08947.1"/>
    <property type="match status" value="1"/>
</dbReference>
<dbReference type="PANTHER" id="PTHR43853:SF11">
    <property type="entry name" value="3-KETOACYL-COA THIOLASE FADA"/>
    <property type="match status" value="1"/>
</dbReference>
<dbReference type="PANTHER" id="PTHR43853">
    <property type="entry name" value="3-KETOACYL-COA THIOLASE, PEROXISOMAL"/>
    <property type="match status" value="1"/>
</dbReference>
<dbReference type="Pfam" id="PF02803">
    <property type="entry name" value="Thiolase_C"/>
    <property type="match status" value="1"/>
</dbReference>
<dbReference type="Pfam" id="PF00108">
    <property type="entry name" value="Thiolase_N"/>
    <property type="match status" value="1"/>
</dbReference>
<dbReference type="PIRSF" id="PIRSF000429">
    <property type="entry name" value="Ac-CoA_Ac_transf"/>
    <property type="match status" value="1"/>
</dbReference>
<dbReference type="SUPFAM" id="SSF53901">
    <property type="entry name" value="Thiolase-like"/>
    <property type="match status" value="2"/>
</dbReference>
<dbReference type="PROSITE" id="PS00098">
    <property type="entry name" value="THIOLASE_1"/>
    <property type="match status" value="1"/>
</dbReference>
<dbReference type="PROSITE" id="PS00737">
    <property type="entry name" value="THIOLASE_2"/>
    <property type="match status" value="1"/>
</dbReference>
<dbReference type="PROSITE" id="PS00099">
    <property type="entry name" value="THIOLASE_3"/>
    <property type="match status" value="1"/>
</dbReference>